<dbReference type="EC" id="3.6.5.3" evidence="1"/>
<dbReference type="EMBL" id="X76864">
    <property type="protein sequence ID" value="CAA54193.1"/>
    <property type="molecule type" value="Genomic_DNA"/>
</dbReference>
<dbReference type="PIR" id="I40602">
    <property type="entry name" value="I40602"/>
</dbReference>
<dbReference type="SMR" id="P42472"/>
<dbReference type="GO" id="GO:0005829">
    <property type="term" value="C:cytosol"/>
    <property type="evidence" value="ECO:0007669"/>
    <property type="project" value="TreeGrafter"/>
</dbReference>
<dbReference type="GO" id="GO:0005525">
    <property type="term" value="F:GTP binding"/>
    <property type="evidence" value="ECO:0007669"/>
    <property type="project" value="UniProtKB-KW"/>
</dbReference>
<dbReference type="GO" id="GO:0003924">
    <property type="term" value="F:GTPase activity"/>
    <property type="evidence" value="ECO:0007669"/>
    <property type="project" value="InterPro"/>
</dbReference>
<dbReference type="GO" id="GO:0003746">
    <property type="term" value="F:translation elongation factor activity"/>
    <property type="evidence" value="ECO:0007669"/>
    <property type="project" value="UniProtKB-KW"/>
</dbReference>
<dbReference type="CDD" id="cd01884">
    <property type="entry name" value="EF_Tu"/>
    <property type="match status" value="1"/>
</dbReference>
<dbReference type="CDD" id="cd03697">
    <property type="entry name" value="EFTU_II"/>
    <property type="match status" value="1"/>
</dbReference>
<dbReference type="CDD" id="cd03707">
    <property type="entry name" value="EFTU_III"/>
    <property type="match status" value="1"/>
</dbReference>
<dbReference type="FunFam" id="2.40.30.10:FF:000001">
    <property type="entry name" value="Elongation factor Tu"/>
    <property type="match status" value="1"/>
</dbReference>
<dbReference type="FunFam" id="3.40.50.300:FF:000003">
    <property type="entry name" value="Elongation factor Tu"/>
    <property type="match status" value="1"/>
</dbReference>
<dbReference type="Gene3D" id="3.40.50.300">
    <property type="entry name" value="P-loop containing nucleotide triphosphate hydrolases"/>
    <property type="match status" value="1"/>
</dbReference>
<dbReference type="Gene3D" id="2.40.30.10">
    <property type="entry name" value="Translation factors"/>
    <property type="match status" value="2"/>
</dbReference>
<dbReference type="HAMAP" id="MF_00118_B">
    <property type="entry name" value="EF_Tu_B"/>
    <property type="match status" value="1"/>
</dbReference>
<dbReference type="InterPro" id="IPR041709">
    <property type="entry name" value="EF-Tu_GTP-bd"/>
</dbReference>
<dbReference type="InterPro" id="IPR050055">
    <property type="entry name" value="EF-Tu_GTPase"/>
</dbReference>
<dbReference type="InterPro" id="IPR004161">
    <property type="entry name" value="EFTu-like_2"/>
</dbReference>
<dbReference type="InterPro" id="IPR033720">
    <property type="entry name" value="EFTU_2"/>
</dbReference>
<dbReference type="InterPro" id="IPR031157">
    <property type="entry name" value="G_TR_CS"/>
</dbReference>
<dbReference type="InterPro" id="IPR027417">
    <property type="entry name" value="P-loop_NTPase"/>
</dbReference>
<dbReference type="InterPro" id="IPR005225">
    <property type="entry name" value="Small_GTP-bd"/>
</dbReference>
<dbReference type="InterPro" id="IPR000795">
    <property type="entry name" value="T_Tr_GTP-bd_dom"/>
</dbReference>
<dbReference type="InterPro" id="IPR009000">
    <property type="entry name" value="Transl_B-barrel_sf"/>
</dbReference>
<dbReference type="InterPro" id="IPR009001">
    <property type="entry name" value="Transl_elong_EF1A/Init_IF2_C"/>
</dbReference>
<dbReference type="InterPro" id="IPR004541">
    <property type="entry name" value="Transl_elong_EFTu/EF1A_bac/org"/>
</dbReference>
<dbReference type="InterPro" id="IPR004160">
    <property type="entry name" value="Transl_elong_EFTu/EF1A_C"/>
</dbReference>
<dbReference type="NCBIfam" id="TIGR00485">
    <property type="entry name" value="EF-Tu"/>
    <property type="match status" value="1"/>
</dbReference>
<dbReference type="NCBIfam" id="NF000766">
    <property type="entry name" value="PRK00049.1"/>
    <property type="match status" value="1"/>
</dbReference>
<dbReference type="NCBIfam" id="NF009372">
    <property type="entry name" value="PRK12735.1"/>
    <property type="match status" value="1"/>
</dbReference>
<dbReference type="NCBIfam" id="NF009373">
    <property type="entry name" value="PRK12736.1"/>
    <property type="match status" value="1"/>
</dbReference>
<dbReference type="NCBIfam" id="TIGR00231">
    <property type="entry name" value="small_GTP"/>
    <property type="match status" value="1"/>
</dbReference>
<dbReference type="PANTHER" id="PTHR43721:SF22">
    <property type="entry name" value="ELONGATION FACTOR TU, MITOCHONDRIAL"/>
    <property type="match status" value="1"/>
</dbReference>
<dbReference type="PANTHER" id="PTHR43721">
    <property type="entry name" value="ELONGATION FACTOR TU-RELATED"/>
    <property type="match status" value="1"/>
</dbReference>
<dbReference type="Pfam" id="PF00009">
    <property type="entry name" value="GTP_EFTU"/>
    <property type="match status" value="1"/>
</dbReference>
<dbReference type="Pfam" id="PF03144">
    <property type="entry name" value="GTP_EFTU_D2"/>
    <property type="match status" value="1"/>
</dbReference>
<dbReference type="Pfam" id="PF03143">
    <property type="entry name" value="GTP_EFTU_D3"/>
    <property type="match status" value="1"/>
</dbReference>
<dbReference type="PRINTS" id="PR00315">
    <property type="entry name" value="ELONGATNFCT"/>
</dbReference>
<dbReference type="SUPFAM" id="SSF50465">
    <property type="entry name" value="EF-Tu/eEF-1alpha/eIF2-gamma C-terminal domain"/>
    <property type="match status" value="1"/>
</dbReference>
<dbReference type="SUPFAM" id="SSF52540">
    <property type="entry name" value="P-loop containing nucleoside triphosphate hydrolases"/>
    <property type="match status" value="1"/>
</dbReference>
<dbReference type="SUPFAM" id="SSF50447">
    <property type="entry name" value="Translation proteins"/>
    <property type="match status" value="1"/>
</dbReference>
<dbReference type="PROSITE" id="PS00301">
    <property type="entry name" value="G_TR_1"/>
    <property type="match status" value="1"/>
</dbReference>
<dbReference type="PROSITE" id="PS51722">
    <property type="entry name" value="G_TR_2"/>
    <property type="match status" value="1"/>
</dbReference>
<keyword id="KW-0963">Cytoplasm</keyword>
<keyword id="KW-0251">Elongation factor</keyword>
<keyword id="KW-0342">GTP-binding</keyword>
<keyword id="KW-0378">Hydrolase</keyword>
<keyword id="KW-0460">Magnesium</keyword>
<keyword id="KW-0479">Metal-binding</keyword>
<keyword id="KW-0547">Nucleotide-binding</keyword>
<keyword id="KW-0648">Protein biosynthesis</keyword>
<feature type="chain" id="PRO_0000091309" description="Elongation factor Tu">
    <location>
        <begin position="1" status="less than"/>
        <end position="382"/>
    </location>
</feature>
<feature type="domain" description="tr-type G">
    <location>
        <begin position="1" status="less than"/>
        <end position="190"/>
    </location>
</feature>
<feature type="binding site" evidence="1">
    <location>
        <begin position="1" status="less than"/>
        <end position="7"/>
    </location>
    <ligand>
        <name>GTP</name>
        <dbReference type="ChEBI" id="CHEBI:37565"/>
    </ligand>
</feature>
<feature type="binding site" evidence="1">
    <location>
        <position position="7"/>
    </location>
    <ligand>
        <name>Mg(2+)</name>
        <dbReference type="ChEBI" id="CHEBI:18420"/>
    </ligand>
</feature>
<feature type="binding site" evidence="1">
    <location>
        <begin position="62"/>
        <end position="66"/>
    </location>
    <ligand>
        <name>GTP</name>
        <dbReference type="ChEBI" id="CHEBI:37565"/>
    </ligand>
</feature>
<feature type="binding site" evidence="1">
    <location>
        <begin position="117"/>
        <end position="120"/>
    </location>
    <ligand>
        <name>GTP</name>
        <dbReference type="ChEBI" id="CHEBI:37565"/>
    </ligand>
</feature>
<feature type="non-terminal residue">
    <location>
        <position position="1"/>
    </location>
</feature>
<evidence type="ECO:0000255" key="1">
    <source>
        <dbReference type="HAMAP-Rule" id="MF_00118"/>
    </source>
</evidence>
<protein>
    <recommendedName>
        <fullName evidence="1">Elongation factor Tu</fullName>
        <shortName evidence="1">EF-Tu</shortName>
        <ecNumber evidence="1">3.6.5.3</ecNumber>
    </recommendedName>
</protein>
<reference key="1">
    <citation type="journal article" date="1993" name="Antonie Van Leeuwenhoek">
        <title>Phylogenetic relationships of Bacteria based on comparative sequence analysis of elongation factor Tu and ATP-synthase beta-subunit genes.</title>
        <authorList>
            <person name="Ludwig W."/>
            <person name="Neumaier J."/>
            <person name="Klugbauer N."/>
            <person name="Brockmann E."/>
            <person name="Roller C."/>
            <person name="Klugbauer S."/>
            <person name="Reetz K."/>
            <person name="Schachtner I."/>
            <person name="Ludvigsen A."/>
            <person name="Bachleitner M."/>
            <person name="Fischer U."/>
            <person name="Schleifer K.H."/>
        </authorList>
    </citation>
    <scope>NUCLEOTIDE SEQUENCE [GENOMIC DNA]</scope>
    <source>
        <strain>DSM 636 / OK-70-fl</strain>
    </source>
</reference>
<gene>
    <name evidence="1" type="primary">tuf</name>
</gene>
<accession>P42472</accession>
<organism>
    <name type="scientific">Chloroflexus aurantiacus</name>
    <dbReference type="NCBI Taxonomy" id="1108"/>
    <lineage>
        <taxon>Bacteria</taxon>
        <taxon>Bacillati</taxon>
        <taxon>Chloroflexota</taxon>
        <taxon>Chloroflexia</taxon>
        <taxon>Chloroflexales</taxon>
        <taxon>Chloroflexineae</taxon>
        <taxon>Chloroflexaceae</taxon>
        <taxon>Chloroflexus</taxon>
    </lineage>
</organism>
<proteinExistence type="inferred from homology"/>
<sequence length="382" mass="41913">HVDHGKTTLTAAITKVMSLKGAAQFMAYDQIDNAPEERARGITIAIRHVEYQTDKRHYAHVDCPGHADYIKNMITGAAQMDGAILVVSAPDGPMPQTREHILLARQVQVPAIVVFLNKVDMMDDPELLELVELELRELLSKYGFPGDEIPIVRGTARNALESPSKDINAPEYKCILELMNAVDEYIPTPQRAVDQPFLMPIEDVFGIKGRGTVVTGRIERGKVKVGDTVEIVGMTNDAPRRTVVTGVEMFQKTLDEGIAGDNVGCLLRGIERTDVERGQVLCAPGSIKPHKKFEAQVYVLKKEEGGRHTPFFSGYRPQFYIRTTDVTGAIGLPAGMEMVMPGDNVVMTIELIVPVAIEEGLRFAIREGGRTVGAGVVTKILD</sequence>
<name>EFTU_CHLAU</name>
<comment type="function">
    <text evidence="1">GTP hydrolase that promotes the GTP-dependent binding of aminoacyl-tRNA to the A-site of ribosomes during protein biosynthesis.</text>
</comment>
<comment type="catalytic activity">
    <reaction evidence="1">
        <text>GTP + H2O = GDP + phosphate + H(+)</text>
        <dbReference type="Rhea" id="RHEA:19669"/>
        <dbReference type="ChEBI" id="CHEBI:15377"/>
        <dbReference type="ChEBI" id="CHEBI:15378"/>
        <dbReference type="ChEBI" id="CHEBI:37565"/>
        <dbReference type="ChEBI" id="CHEBI:43474"/>
        <dbReference type="ChEBI" id="CHEBI:58189"/>
        <dbReference type="EC" id="3.6.5.3"/>
    </reaction>
    <physiologicalReaction direction="left-to-right" evidence="1">
        <dbReference type="Rhea" id="RHEA:19670"/>
    </physiologicalReaction>
</comment>
<comment type="subunit">
    <text evidence="1">Monomer.</text>
</comment>
<comment type="subcellular location">
    <subcellularLocation>
        <location evidence="1">Cytoplasm</location>
    </subcellularLocation>
</comment>
<comment type="similarity">
    <text evidence="1">Belongs to the TRAFAC class translation factor GTPase superfamily. Classic translation factor GTPase family. EF-Tu/EF-1A subfamily.</text>
</comment>